<protein>
    <recommendedName>
        <fullName evidence="1">Bifunctional protein FolD</fullName>
    </recommendedName>
    <domain>
        <recommendedName>
            <fullName evidence="1">Methylenetetrahydrofolate dehydrogenase</fullName>
            <ecNumber evidence="1">1.5.1.5</ecNumber>
        </recommendedName>
    </domain>
    <domain>
        <recommendedName>
            <fullName evidence="1">Methenyltetrahydrofolate cyclohydrolase</fullName>
            <ecNumber evidence="1">3.5.4.9</ecNumber>
        </recommendedName>
    </domain>
</protein>
<reference key="1">
    <citation type="journal article" date="2002" name="Proc. Natl. Acad. Sci. U.S.A.">
        <title>Complete genome sequence and comparative genomic analysis of an emerging human pathogen, serotype V Streptococcus agalactiae.</title>
        <authorList>
            <person name="Tettelin H."/>
            <person name="Masignani V."/>
            <person name="Cieslewicz M.J."/>
            <person name="Eisen J.A."/>
            <person name="Peterson S.N."/>
            <person name="Wessels M.R."/>
            <person name="Paulsen I.T."/>
            <person name="Nelson K.E."/>
            <person name="Margarit I."/>
            <person name="Read T.D."/>
            <person name="Madoff L.C."/>
            <person name="Wolf A.M."/>
            <person name="Beanan M.J."/>
            <person name="Brinkac L.M."/>
            <person name="Daugherty S.C."/>
            <person name="DeBoy R.T."/>
            <person name="Durkin A.S."/>
            <person name="Kolonay J.F."/>
            <person name="Madupu R."/>
            <person name="Lewis M.R."/>
            <person name="Radune D."/>
            <person name="Fedorova N.B."/>
            <person name="Scanlan D."/>
            <person name="Khouri H.M."/>
            <person name="Mulligan S."/>
            <person name="Carty H.A."/>
            <person name="Cline R.T."/>
            <person name="Van Aken S.E."/>
            <person name="Gill J."/>
            <person name="Scarselli M."/>
            <person name="Mora M."/>
            <person name="Iacobini E.T."/>
            <person name="Brettoni C."/>
            <person name="Galli G."/>
            <person name="Mariani M."/>
            <person name="Vegni F."/>
            <person name="Maione D."/>
            <person name="Rinaudo D."/>
            <person name="Rappuoli R."/>
            <person name="Telford J.L."/>
            <person name="Kasper D.L."/>
            <person name="Grandi G."/>
            <person name="Fraser C.M."/>
        </authorList>
    </citation>
    <scope>NUCLEOTIDE SEQUENCE [LARGE SCALE GENOMIC DNA]</scope>
    <source>
        <strain>ATCC BAA-611 / 2603 V/R</strain>
    </source>
</reference>
<accession>Q8E168</accession>
<dbReference type="EC" id="1.5.1.5" evidence="1"/>
<dbReference type="EC" id="3.5.4.9" evidence="1"/>
<dbReference type="EMBL" id="AE009948">
    <property type="protein sequence ID" value="AAM99396.1"/>
    <property type="molecule type" value="Genomic_DNA"/>
</dbReference>
<dbReference type="RefSeq" id="NP_687524.1">
    <property type="nucleotide sequence ID" value="NC_004116.1"/>
</dbReference>
<dbReference type="RefSeq" id="WP_000137498.1">
    <property type="nucleotide sequence ID" value="NC_004116.1"/>
</dbReference>
<dbReference type="SMR" id="Q8E168"/>
<dbReference type="STRING" id="208435.SAG0494"/>
<dbReference type="KEGG" id="sag:SAG0494"/>
<dbReference type="PATRIC" id="fig|208435.3.peg.491"/>
<dbReference type="HOGENOM" id="CLU_034045_2_1_9"/>
<dbReference type="OrthoDB" id="9803580at2"/>
<dbReference type="UniPathway" id="UPA00193"/>
<dbReference type="Proteomes" id="UP000000821">
    <property type="component" value="Chromosome"/>
</dbReference>
<dbReference type="GO" id="GO:0005829">
    <property type="term" value="C:cytosol"/>
    <property type="evidence" value="ECO:0007669"/>
    <property type="project" value="TreeGrafter"/>
</dbReference>
<dbReference type="GO" id="GO:0004477">
    <property type="term" value="F:methenyltetrahydrofolate cyclohydrolase activity"/>
    <property type="evidence" value="ECO:0007669"/>
    <property type="project" value="UniProtKB-UniRule"/>
</dbReference>
<dbReference type="GO" id="GO:0004488">
    <property type="term" value="F:methylenetetrahydrofolate dehydrogenase (NADP+) activity"/>
    <property type="evidence" value="ECO:0007669"/>
    <property type="project" value="UniProtKB-UniRule"/>
</dbReference>
<dbReference type="GO" id="GO:0000105">
    <property type="term" value="P:L-histidine biosynthetic process"/>
    <property type="evidence" value="ECO:0007669"/>
    <property type="project" value="UniProtKB-KW"/>
</dbReference>
<dbReference type="GO" id="GO:0009086">
    <property type="term" value="P:methionine biosynthetic process"/>
    <property type="evidence" value="ECO:0007669"/>
    <property type="project" value="UniProtKB-KW"/>
</dbReference>
<dbReference type="GO" id="GO:0006164">
    <property type="term" value="P:purine nucleotide biosynthetic process"/>
    <property type="evidence" value="ECO:0007669"/>
    <property type="project" value="UniProtKB-KW"/>
</dbReference>
<dbReference type="GO" id="GO:0035999">
    <property type="term" value="P:tetrahydrofolate interconversion"/>
    <property type="evidence" value="ECO:0007669"/>
    <property type="project" value="UniProtKB-UniRule"/>
</dbReference>
<dbReference type="CDD" id="cd01080">
    <property type="entry name" value="NAD_bind_m-THF_DH_Cyclohyd"/>
    <property type="match status" value="1"/>
</dbReference>
<dbReference type="FunFam" id="3.40.50.10860:FF:000001">
    <property type="entry name" value="Bifunctional protein FolD"/>
    <property type="match status" value="1"/>
</dbReference>
<dbReference type="FunFam" id="3.40.50.720:FF:000094">
    <property type="entry name" value="Bifunctional protein FolD"/>
    <property type="match status" value="1"/>
</dbReference>
<dbReference type="Gene3D" id="3.40.50.10860">
    <property type="entry name" value="Leucine Dehydrogenase, chain A, domain 1"/>
    <property type="match status" value="1"/>
</dbReference>
<dbReference type="Gene3D" id="3.40.50.720">
    <property type="entry name" value="NAD(P)-binding Rossmann-like Domain"/>
    <property type="match status" value="1"/>
</dbReference>
<dbReference type="HAMAP" id="MF_01576">
    <property type="entry name" value="THF_DHG_CYH"/>
    <property type="match status" value="1"/>
</dbReference>
<dbReference type="InterPro" id="IPR046346">
    <property type="entry name" value="Aminoacid_DH-like_N_sf"/>
</dbReference>
<dbReference type="InterPro" id="IPR036291">
    <property type="entry name" value="NAD(P)-bd_dom_sf"/>
</dbReference>
<dbReference type="InterPro" id="IPR000672">
    <property type="entry name" value="THF_DH/CycHdrlase"/>
</dbReference>
<dbReference type="InterPro" id="IPR020630">
    <property type="entry name" value="THF_DH/CycHdrlase_cat_dom"/>
</dbReference>
<dbReference type="InterPro" id="IPR020867">
    <property type="entry name" value="THF_DH/CycHdrlase_CS"/>
</dbReference>
<dbReference type="InterPro" id="IPR020631">
    <property type="entry name" value="THF_DH/CycHdrlase_NAD-bd_dom"/>
</dbReference>
<dbReference type="NCBIfam" id="NF008058">
    <property type="entry name" value="PRK10792.1"/>
    <property type="match status" value="1"/>
</dbReference>
<dbReference type="NCBIfam" id="NF010776">
    <property type="entry name" value="PRK14179.1"/>
    <property type="match status" value="1"/>
</dbReference>
<dbReference type="NCBIfam" id="NF010783">
    <property type="entry name" value="PRK14186.1"/>
    <property type="match status" value="1"/>
</dbReference>
<dbReference type="NCBIfam" id="NF010785">
    <property type="entry name" value="PRK14188.1"/>
    <property type="match status" value="1"/>
</dbReference>
<dbReference type="PANTHER" id="PTHR48099:SF5">
    <property type="entry name" value="C-1-TETRAHYDROFOLATE SYNTHASE, CYTOPLASMIC"/>
    <property type="match status" value="1"/>
</dbReference>
<dbReference type="PANTHER" id="PTHR48099">
    <property type="entry name" value="C-1-TETRAHYDROFOLATE SYNTHASE, CYTOPLASMIC-RELATED"/>
    <property type="match status" value="1"/>
</dbReference>
<dbReference type="Pfam" id="PF00763">
    <property type="entry name" value="THF_DHG_CYH"/>
    <property type="match status" value="1"/>
</dbReference>
<dbReference type="Pfam" id="PF02882">
    <property type="entry name" value="THF_DHG_CYH_C"/>
    <property type="match status" value="1"/>
</dbReference>
<dbReference type="PRINTS" id="PR00085">
    <property type="entry name" value="THFDHDRGNASE"/>
</dbReference>
<dbReference type="SUPFAM" id="SSF53223">
    <property type="entry name" value="Aminoacid dehydrogenase-like, N-terminal domain"/>
    <property type="match status" value="1"/>
</dbReference>
<dbReference type="SUPFAM" id="SSF51735">
    <property type="entry name" value="NAD(P)-binding Rossmann-fold domains"/>
    <property type="match status" value="1"/>
</dbReference>
<dbReference type="PROSITE" id="PS00766">
    <property type="entry name" value="THF_DHG_CYH_1"/>
    <property type="match status" value="1"/>
</dbReference>
<dbReference type="PROSITE" id="PS00767">
    <property type="entry name" value="THF_DHG_CYH_2"/>
    <property type="match status" value="1"/>
</dbReference>
<organism>
    <name type="scientific">Streptococcus agalactiae serotype V (strain ATCC BAA-611 / 2603 V/R)</name>
    <dbReference type="NCBI Taxonomy" id="208435"/>
    <lineage>
        <taxon>Bacteria</taxon>
        <taxon>Bacillati</taxon>
        <taxon>Bacillota</taxon>
        <taxon>Bacilli</taxon>
        <taxon>Lactobacillales</taxon>
        <taxon>Streptococcaceae</taxon>
        <taxon>Streptococcus</taxon>
    </lineage>
</organism>
<proteinExistence type="inferred from homology"/>
<evidence type="ECO:0000255" key="1">
    <source>
        <dbReference type="HAMAP-Rule" id="MF_01576"/>
    </source>
</evidence>
<comment type="function">
    <text evidence="1">Catalyzes the oxidation of 5,10-methylenetetrahydrofolate to 5,10-methenyltetrahydrofolate and then the hydrolysis of 5,10-methenyltetrahydrofolate to 10-formyltetrahydrofolate.</text>
</comment>
<comment type="catalytic activity">
    <reaction evidence="1">
        <text>(6R)-5,10-methylene-5,6,7,8-tetrahydrofolate + NADP(+) = (6R)-5,10-methenyltetrahydrofolate + NADPH</text>
        <dbReference type="Rhea" id="RHEA:22812"/>
        <dbReference type="ChEBI" id="CHEBI:15636"/>
        <dbReference type="ChEBI" id="CHEBI:57455"/>
        <dbReference type="ChEBI" id="CHEBI:57783"/>
        <dbReference type="ChEBI" id="CHEBI:58349"/>
        <dbReference type="EC" id="1.5.1.5"/>
    </reaction>
</comment>
<comment type="catalytic activity">
    <reaction evidence="1">
        <text>(6R)-5,10-methenyltetrahydrofolate + H2O = (6R)-10-formyltetrahydrofolate + H(+)</text>
        <dbReference type="Rhea" id="RHEA:23700"/>
        <dbReference type="ChEBI" id="CHEBI:15377"/>
        <dbReference type="ChEBI" id="CHEBI:15378"/>
        <dbReference type="ChEBI" id="CHEBI:57455"/>
        <dbReference type="ChEBI" id="CHEBI:195366"/>
        <dbReference type="EC" id="3.5.4.9"/>
    </reaction>
</comment>
<comment type="pathway">
    <text evidence="1">One-carbon metabolism; tetrahydrofolate interconversion.</text>
</comment>
<comment type="subunit">
    <text evidence="1">Homodimer.</text>
</comment>
<comment type="similarity">
    <text evidence="1">Belongs to the tetrahydrofolate dehydrogenase/cyclohydrolase family.</text>
</comment>
<feature type="chain" id="PRO_0000268510" description="Bifunctional protein FolD">
    <location>
        <begin position="1"/>
        <end position="284"/>
    </location>
</feature>
<feature type="binding site" evidence="1">
    <location>
        <begin position="165"/>
        <end position="167"/>
    </location>
    <ligand>
        <name>NADP(+)</name>
        <dbReference type="ChEBI" id="CHEBI:58349"/>
    </ligand>
</feature>
<feature type="binding site" evidence="1">
    <location>
        <position position="190"/>
    </location>
    <ligand>
        <name>NADP(+)</name>
        <dbReference type="ChEBI" id="CHEBI:58349"/>
    </ligand>
</feature>
<gene>
    <name evidence="1" type="primary">folD</name>
    <name type="ordered locus">SAG0494</name>
</gene>
<keyword id="KW-0028">Amino-acid biosynthesis</keyword>
<keyword id="KW-0368">Histidine biosynthesis</keyword>
<keyword id="KW-0378">Hydrolase</keyword>
<keyword id="KW-0486">Methionine biosynthesis</keyword>
<keyword id="KW-0511">Multifunctional enzyme</keyword>
<keyword id="KW-0521">NADP</keyword>
<keyword id="KW-0554">One-carbon metabolism</keyword>
<keyword id="KW-0560">Oxidoreductase</keyword>
<keyword id="KW-0658">Purine biosynthesis</keyword>
<keyword id="KW-1185">Reference proteome</keyword>
<sequence>MTELIDGKALSQKMQAELGRKVERLKEQHGIIPGLAVILVGDNPASQVYVRNKERSALEAGFKSETLRLSESISQEELIDIIHQYNEDKSIHGILVQLPLPQHINDKKIILAIDPKKDVDGFHPMNTGHLWSGRPMMVPCTPAGIMEMFREYHVDLEGKHAVIIGRSNIVGKPMAQLLLDKNATVTLTHSRTRNLSEVTKEADILIVAIGQGHFVTKDFVKEGAVVIDVGMNRDENGKLIGDVVFEQVAEVASMITPVPGGVGPMTITMLLEQTYQAALRSVSL</sequence>
<name>FOLD_STRA5</name>